<evidence type="ECO:0000255" key="1">
    <source>
        <dbReference type="HAMAP-Rule" id="MF_00038"/>
    </source>
</evidence>
<evidence type="ECO:0000305" key="2"/>
<keyword id="KW-0131">Cell cycle</keyword>
<keyword id="KW-0132">Cell division</keyword>
<keyword id="KW-1003">Cell membrane</keyword>
<keyword id="KW-0133">Cell shape</keyword>
<keyword id="KW-0961">Cell wall biogenesis/degradation</keyword>
<keyword id="KW-0460">Magnesium</keyword>
<keyword id="KW-0472">Membrane</keyword>
<keyword id="KW-0479">Metal-binding</keyword>
<keyword id="KW-0573">Peptidoglycan synthesis</keyword>
<keyword id="KW-0808">Transferase</keyword>
<keyword id="KW-0812">Transmembrane</keyword>
<keyword id="KW-1133">Transmembrane helix</keyword>
<sequence length="321" mass="35232">MIFVYALLALVITFVLVPVLIPTLKRMKFGQSIREEGPQSHMKKTGTPTMGGLTFLLSIVITSLVAIIFVDQANPIILLLFVTIGFGLIGFIDDYIIVVKKNNQGLTSKQKFLAQIGIAIIFFVLSNVFHLVNFSTSIHIPFTNVAIPLSFAYVIFIVFWQVGFSNAVNLTDGLDGLATGLSIIGFTMYAIMSFVLGETAIGIFCIIMLFALLGFLPYNINPAKVFMGDTGSLALGGIFATISIMLNQELSLIFIGLVFVIETLSVMLQVASFKLTGKRIFKMSPIHHHFELIGWSEWKVVTVFWAVGLISGLIGLWIGVH</sequence>
<protein>
    <recommendedName>
        <fullName evidence="1">Phospho-N-acetylmuramoyl-pentapeptide-transferase</fullName>
        <ecNumber evidence="1">2.7.8.13</ecNumber>
    </recommendedName>
    <alternativeName>
        <fullName evidence="1">UDP-MurNAc-pentapeptide phosphotransferase</fullName>
    </alternativeName>
</protein>
<reference key="1">
    <citation type="journal article" date="2001" name="Lancet">
        <title>Whole genome sequencing of meticillin-resistant Staphylococcus aureus.</title>
        <authorList>
            <person name="Kuroda M."/>
            <person name="Ohta T."/>
            <person name="Uchiyama I."/>
            <person name="Baba T."/>
            <person name="Yuzawa H."/>
            <person name="Kobayashi I."/>
            <person name="Cui L."/>
            <person name="Oguchi A."/>
            <person name="Aoki K."/>
            <person name="Nagai Y."/>
            <person name="Lian J.-Q."/>
            <person name="Ito T."/>
            <person name="Kanamori M."/>
            <person name="Matsumaru H."/>
            <person name="Maruyama A."/>
            <person name="Murakami H."/>
            <person name="Hosoyama A."/>
            <person name="Mizutani-Ui Y."/>
            <person name="Takahashi N.K."/>
            <person name="Sawano T."/>
            <person name="Inoue R."/>
            <person name="Kaito C."/>
            <person name="Sekimizu K."/>
            <person name="Hirakawa H."/>
            <person name="Kuhara S."/>
            <person name="Goto S."/>
            <person name="Yabuzaki J."/>
            <person name="Kanehisa M."/>
            <person name="Yamashita A."/>
            <person name="Oshima K."/>
            <person name="Furuya K."/>
            <person name="Yoshino C."/>
            <person name="Shiba T."/>
            <person name="Hattori M."/>
            <person name="Ogasawara N."/>
            <person name="Hayashi H."/>
            <person name="Hiramatsu K."/>
        </authorList>
    </citation>
    <scope>NUCLEOTIDE SEQUENCE [LARGE SCALE GENOMIC DNA]</scope>
    <source>
        <strain>Mu50 / ATCC 700699</strain>
    </source>
</reference>
<dbReference type="EC" id="2.7.8.13" evidence="1"/>
<dbReference type="EMBL" id="BA000017">
    <property type="protein sequence ID" value="BAB57344.1"/>
    <property type="molecule type" value="Genomic_DNA"/>
</dbReference>
<dbReference type="RefSeq" id="WP_000578458.1">
    <property type="nucleotide sequence ID" value="NC_002758.2"/>
</dbReference>
<dbReference type="SMR" id="P68782"/>
<dbReference type="KEGG" id="sav:SAV1182"/>
<dbReference type="HOGENOM" id="CLU_023982_0_1_9"/>
<dbReference type="PhylomeDB" id="P68782"/>
<dbReference type="UniPathway" id="UPA00219"/>
<dbReference type="Proteomes" id="UP000002481">
    <property type="component" value="Chromosome"/>
</dbReference>
<dbReference type="GO" id="GO:0005886">
    <property type="term" value="C:plasma membrane"/>
    <property type="evidence" value="ECO:0007669"/>
    <property type="project" value="UniProtKB-SubCell"/>
</dbReference>
<dbReference type="GO" id="GO:0046872">
    <property type="term" value="F:metal ion binding"/>
    <property type="evidence" value="ECO:0007669"/>
    <property type="project" value="UniProtKB-KW"/>
</dbReference>
<dbReference type="GO" id="GO:0008963">
    <property type="term" value="F:phospho-N-acetylmuramoyl-pentapeptide-transferase activity"/>
    <property type="evidence" value="ECO:0007669"/>
    <property type="project" value="UniProtKB-UniRule"/>
</dbReference>
<dbReference type="GO" id="GO:0051301">
    <property type="term" value="P:cell division"/>
    <property type="evidence" value="ECO:0007669"/>
    <property type="project" value="UniProtKB-KW"/>
</dbReference>
<dbReference type="GO" id="GO:0071555">
    <property type="term" value="P:cell wall organization"/>
    <property type="evidence" value="ECO:0007669"/>
    <property type="project" value="UniProtKB-KW"/>
</dbReference>
<dbReference type="GO" id="GO:0009252">
    <property type="term" value="P:peptidoglycan biosynthetic process"/>
    <property type="evidence" value="ECO:0007669"/>
    <property type="project" value="UniProtKB-UniRule"/>
</dbReference>
<dbReference type="GO" id="GO:0008360">
    <property type="term" value="P:regulation of cell shape"/>
    <property type="evidence" value="ECO:0007669"/>
    <property type="project" value="UniProtKB-KW"/>
</dbReference>
<dbReference type="CDD" id="cd06852">
    <property type="entry name" value="GT_MraY"/>
    <property type="match status" value="1"/>
</dbReference>
<dbReference type="HAMAP" id="MF_00038">
    <property type="entry name" value="MraY"/>
    <property type="match status" value="1"/>
</dbReference>
<dbReference type="InterPro" id="IPR000715">
    <property type="entry name" value="Glycosyl_transferase_4"/>
</dbReference>
<dbReference type="InterPro" id="IPR003524">
    <property type="entry name" value="PNAcMuramoyl-5peptid_Trfase"/>
</dbReference>
<dbReference type="InterPro" id="IPR018480">
    <property type="entry name" value="PNAcMuramoyl-5peptid_Trfase_CS"/>
</dbReference>
<dbReference type="NCBIfam" id="TIGR00445">
    <property type="entry name" value="mraY"/>
    <property type="match status" value="1"/>
</dbReference>
<dbReference type="PANTHER" id="PTHR22926">
    <property type="entry name" value="PHOSPHO-N-ACETYLMURAMOYL-PENTAPEPTIDE-TRANSFERASE"/>
    <property type="match status" value="1"/>
</dbReference>
<dbReference type="PANTHER" id="PTHR22926:SF5">
    <property type="entry name" value="PHOSPHO-N-ACETYLMURAMOYL-PENTAPEPTIDE-TRANSFERASE HOMOLOG"/>
    <property type="match status" value="1"/>
</dbReference>
<dbReference type="Pfam" id="PF00953">
    <property type="entry name" value="Glycos_transf_4"/>
    <property type="match status" value="1"/>
</dbReference>
<dbReference type="PROSITE" id="PS01347">
    <property type="entry name" value="MRAY_1"/>
    <property type="match status" value="1"/>
</dbReference>
<dbReference type="PROSITE" id="PS01348">
    <property type="entry name" value="MRAY_2"/>
    <property type="match status" value="1"/>
</dbReference>
<proteinExistence type="inferred from homology"/>
<name>MRAY_STAAM</name>
<accession>P68782</accession>
<accession>O07322</accession>
<accession>O24815</accession>
<comment type="function">
    <text evidence="1">Catalyzes the initial step of the lipid cycle reactions in the biosynthesis of the cell wall peptidoglycan: transfers peptidoglycan precursor phospho-MurNAc-pentapeptide from UDP-MurNAc-pentapeptide onto the lipid carrier undecaprenyl phosphate, yielding undecaprenyl-pyrophosphoryl-MurNAc-pentapeptide, known as lipid I.</text>
</comment>
<comment type="catalytic activity">
    <reaction evidence="1">
        <text>UDP-N-acetyl-alpha-D-muramoyl-L-alanyl-gamma-D-glutamyl-L-lysyl-D-alanyl-D-alanine + di-trans,octa-cis-undecaprenyl phosphate = Mur2Ac(oyl-L-Ala-gamma-D-Glu-L-Lys-D-Ala-D-Ala)-di-trans,octa-cis-undecaprenyl diphosphate + UMP</text>
        <dbReference type="Rhea" id="RHEA:21920"/>
        <dbReference type="ChEBI" id="CHEBI:57865"/>
        <dbReference type="ChEBI" id="CHEBI:60032"/>
        <dbReference type="ChEBI" id="CHEBI:60392"/>
        <dbReference type="ChEBI" id="CHEBI:70758"/>
        <dbReference type="EC" id="2.7.8.13"/>
    </reaction>
</comment>
<comment type="cofactor">
    <cofactor evidence="1">
        <name>Mg(2+)</name>
        <dbReference type="ChEBI" id="CHEBI:18420"/>
    </cofactor>
</comment>
<comment type="pathway">
    <text evidence="1">Cell wall biogenesis; peptidoglycan biosynthesis.</text>
</comment>
<comment type="subcellular location">
    <subcellularLocation>
        <location evidence="1">Cell membrane</location>
        <topology evidence="1">Multi-pass membrane protein</topology>
    </subcellularLocation>
</comment>
<comment type="similarity">
    <text evidence="1 2">Belongs to the glycosyltransferase 4 family. MraY subfamily.</text>
</comment>
<organism>
    <name type="scientific">Staphylococcus aureus (strain Mu50 / ATCC 700699)</name>
    <dbReference type="NCBI Taxonomy" id="158878"/>
    <lineage>
        <taxon>Bacteria</taxon>
        <taxon>Bacillati</taxon>
        <taxon>Bacillota</taxon>
        <taxon>Bacilli</taxon>
        <taxon>Bacillales</taxon>
        <taxon>Staphylococcaceae</taxon>
        <taxon>Staphylococcus</taxon>
    </lineage>
</organism>
<feature type="chain" id="PRO_0000108891" description="Phospho-N-acetylmuramoyl-pentapeptide-transferase">
    <location>
        <begin position="1"/>
        <end position="321"/>
    </location>
</feature>
<feature type="transmembrane region" description="Helical" evidence="1">
    <location>
        <begin position="1"/>
        <end position="21"/>
    </location>
</feature>
<feature type="transmembrane region" description="Helical" evidence="1">
    <location>
        <begin position="50"/>
        <end position="70"/>
    </location>
</feature>
<feature type="transmembrane region" description="Helical" evidence="1">
    <location>
        <begin position="76"/>
        <end position="96"/>
    </location>
</feature>
<feature type="transmembrane region" description="Helical" evidence="1">
    <location>
        <begin position="112"/>
        <end position="132"/>
    </location>
</feature>
<feature type="transmembrane region" description="Helical" evidence="1">
    <location>
        <begin position="140"/>
        <end position="160"/>
    </location>
</feature>
<feature type="transmembrane region" description="Helical" evidence="1">
    <location>
        <begin position="176"/>
        <end position="196"/>
    </location>
</feature>
<feature type="transmembrane region" description="Helical" evidence="1">
    <location>
        <begin position="200"/>
        <end position="220"/>
    </location>
</feature>
<feature type="transmembrane region" description="Helical" evidence="1">
    <location>
        <begin position="225"/>
        <end position="245"/>
    </location>
</feature>
<feature type="transmembrane region" description="Helical" evidence="1">
    <location>
        <begin position="250"/>
        <end position="270"/>
    </location>
</feature>
<feature type="transmembrane region" description="Helical" evidence="1">
    <location>
        <begin position="300"/>
        <end position="320"/>
    </location>
</feature>
<gene>
    <name evidence="1" type="primary">mraY</name>
    <name type="ordered locus">SAV1182</name>
</gene>